<protein>
    <recommendedName>
        <fullName evidence="1">Light-independent protochlorophyllide reductase subunit N</fullName>
        <shortName evidence="1">DPOR subunit N</shortName>
        <shortName evidence="1">LI-POR subunit N</shortName>
        <ecNumber evidence="1">1.3.7.7</ecNumber>
    </recommendedName>
</protein>
<dbReference type="EC" id="1.3.7.7" evidence="1"/>
<dbReference type="EMBL" id="AB034704">
    <property type="protein sequence ID" value="BAA94059.1"/>
    <property type="molecule type" value="Genomic_DNA"/>
</dbReference>
<dbReference type="EMBL" id="AP012320">
    <property type="protein sequence ID" value="BAL96685.1"/>
    <property type="molecule type" value="Genomic_DNA"/>
</dbReference>
<dbReference type="PIR" id="T50906">
    <property type="entry name" value="T50906"/>
</dbReference>
<dbReference type="RefSeq" id="WP_014429546.1">
    <property type="nucleotide sequence ID" value="NC_017075.1"/>
</dbReference>
<dbReference type="SMR" id="Q9JPA2"/>
<dbReference type="STRING" id="983917.RGE_33460"/>
<dbReference type="KEGG" id="rge:RGE_33460"/>
<dbReference type="PATRIC" id="fig|983917.3.peg.3271"/>
<dbReference type="eggNOG" id="COG2710">
    <property type="taxonomic scope" value="Bacteria"/>
</dbReference>
<dbReference type="HOGENOM" id="CLU_037170_0_0_4"/>
<dbReference type="UniPathway" id="UPA00671"/>
<dbReference type="Proteomes" id="UP000007883">
    <property type="component" value="Chromosome"/>
</dbReference>
<dbReference type="GO" id="GO:0051539">
    <property type="term" value="F:4 iron, 4 sulfur cluster binding"/>
    <property type="evidence" value="ECO:0007669"/>
    <property type="project" value="UniProtKB-UniRule"/>
</dbReference>
<dbReference type="GO" id="GO:0005524">
    <property type="term" value="F:ATP binding"/>
    <property type="evidence" value="ECO:0007669"/>
    <property type="project" value="UniProtKB-UniRule"/>
</dbReference>
<dbReference type="GO" id="GO:0046872">
    <property type="term" value="F:metal ion binding"/>
    <property type="evidence" value="ECO:0007669"/>
    <property type="project" value="UniProtKB-KW"/>
</dbReference>
<dbReference type="GO" id="GO:0016730">
    <property type="term" value="F:oxidoreductase activity, acting on iron-sulfur proteins as donors"/>
    <property type="evidence" value="ECO:0007669"/>
    <property type="project" value="InterPro"/>
</dbReference>
<dbReference type="GO" id="GO:0016636">
    <property type="term" value="F:oxidoreductase activity, acting on the CH-CH group of donors, iron-sulfur protein as acceptor"/>
    <property type="evidence" value="ECO:0007669"/>
    <property type="project" value="UniProtKB-UniRule"/>
</dbReference>
<dbReference type="GO" id="GO:0036070">
    <property type="term" value="P:light-independent bacteriochlorophyll biosynthetic process"/>
    <property type="evidence" value="ECO:0007669"/>
    <property type="project" value="UniProtKB-UniRule"/>
</dbReference>
<dbReference type="GO" id="GO:0019685">
    <property type="term" value="P:photosynthesis, dark reaction"/>
    <property type="evidence" value="ECO:0007669"/>
    <property type="project" value="InterPro"/>
</dbReference>
<dbReference type="Gene3D" id="3.40.50.1980">
    <property type="entry name" value="Nitrogenase molybdenum iron protein domain"/>
    <property type="match status" value="3"/>
</dbReference>
<dbReference type="HAMAP" id="MF_00352">
    <property type="entry name" value="ChlN_BchN"/>
    <property type="match status" value="1"/>
</dbReference>
<dbReference type="InterPro" id="IPR050293">
    <property type="entry name" value="LIPOR_BchN/ChlN"/>
</dbReference>
<dbReference type="InterPro" id="IPR000510">
    <property type="entry name" value="Nase/OxRdtase_comp1"/>
</dbReference>
<dbReference type="InterPro" id="IPR005970">
    <property type="entry name" value="Protochl_reductN"/>
</dbReference>
<dbReference type="NCBIfam" id="TIGR01279">
    <property type="entry name" value="DPOR_bchN"/>
    <property type="match status" value="1"/>
</dbReference>
<dbReference type="NCBIfam" id="NF002768">
    <property type="entry name" value="PRK02842.1"/>
    <property type="match status" value="1"/>
</dbReference>
<dbReference type="PANTHER" id="PTHR39429">
    <property type="entry name" value="LIGHT-INDEPENDENT PROTOCHLOROPHYLLIDE REDUCTASE SUBUNIT N"/>
    <property type="match status" value="1"/>
</dbReference>
<dbReference type="PANTHER" id="PTHR39429:SF3">
    <property type="entry name" value="LIGHT-INDEPENDENT PROTOCHLOROPHYLLIDE REDUCTASE SUBUNIT N"/>
    <property type="match status" value="1"/>
</dbReference>
<dbReference type="Pfam" id="PF00148">
    <property type="entry name" value="Oxidored_nitro"/>
    <property type="match status" value="1"/>
</dbReference>
<dbReference type="PIRSF" id="PIRSF000162">
    <property type="entry name" value="P_chlorophyll_rd"/>
    <property type="match status" value="1"/>
</dbReference>
<dbReference type="SUPFAM" id="SSF53807">
    <property type="entry name" value="Helical backbone' metal receptor"/>
    <property type="match status" value="1"/>
</dbReference>
<proteinExistence type="inferred from homology"/>
<reference key="1">
    <citation type="journal article" date="2001" name="J. Mol. Evol.">
        <title>Horizontal transfer of the photosynthesis gene cluster and operon rearrangement in purple bacteria.</title>
        <authorList>
            <person name="Igarashi N."/>
            <person name="Harada J."/>
            <person name="Nagashima S."/>
            <person name="Matsuura K."/>
            <person name="Shimada K."/>
            <person name="Nagashima K.V.P."/>
        </authorList>
    </citation>
    <scope>NUCLEOTIDE SEQUENCE [GENOMIC DNA]</scope>
    <source>
        <strain>NBRC 100245 / IL144</strain>
    </source>
</reference>
<reference key="2">
    <citation type="journal article" date="2012" name="J. Bacteriol.">
        <title>Complete genome sequence of phototrophic betaproteobacterium Rubrivivax gelatinosus IL144.</title>
        <authorList>
            <person name="Nagashima S."/>
            <person name="Kamimura A."/>
            <person name="Shimizu T."/>
            <person name="Nakamura-Isaki S."/>
            <person name="Aono E."/>
            <person name="Sakamoto K."/>
            <person name="Ichikawa N."/>
            <person name="Nakazawa H."/>
            <person name="Sekine M."/>
            <person name="Yamazaki S."/>
            <person name="Fujita N."/>
            <person name="Shimada K."/>
            <person name="Hanada S."/>
            <person name="Nagashima K.V."/>
        </authorList>
    </citation>
    <scope>NUCLEOTIDE SEQUENCE [LARGE SCALE GENOMIC DNA]</scope>
    <source>
        <strain>NBRC 100245 / IL144</strain>
    </source>
</reference>
<sequence>MNAVIDIAPAPMQQGCGDAPVLHERGQREVFCGLAGIVWLHRKIQDAFFLVVGSRTCAHLLQSAAGVMIFAEPRFATAIIDDRDLAGLADANAELDRVVTRLLERRPDIKMLFLVGSCPSEVIKLDLSRAAERLSRNFSPRVRILSYTGSGIDTTFTQGEDTCLAALVPELPASEQRALMVVGSIADIVEDQFRRVFDGLGIGPVHFFPARHAGDMPPVGPGTRFVLAQPFLADTARALEARGARRLAAPFPFGAEGTTLWLQAIAREFNVEATKFVSVVGPRRERAARALARHRTQLEGRKVFFFPDSQLEVPLARFLAREMGMVPVEVGTPYLHRQLVASELALLPAGTPLSEGQDLERQLDRCRAARPDIVVCGLGLANPLEAEGLTTKWSIELVFTPVHGFDQAADLAELFTRPLERRTRLVA</sequence>
<keyword id="KW-0004">4Fe-4S</keyword>
<keyword id="KW-0067">ATP-binding</keyword>
<keyword id="KW-0077">Bacteriochlorophyll biosynthesis</keyword>
<keyword id="KW-0149">Chlorophyll biosynthesis</keyword>
<keyword id="KW-0408">Iron</keyword>
<keyword id="KW-0411">Iron-sulfur</keyword>
<keyword id="KW-0479">Metal-binding</keyword>
<keyword id="KW-0547">Nucleotide-binding</keyword>
<keyword id="KW-0560">Oxidoreductase</keyword>
<keyword id="KW-0602">Photosynthesis</keyword>
<keyword id="KW-1185">Reference proteome</keyword>
<feature type="chain" id="PRO_0000208597" description="Light-independent protochlorophyllide reductase subunit N">
    <location>
        <begin position="1"/>
        <end position="427"/>
    </location>
</feature>
<feature type="binding site" evidence="1">
    <location>
        <position position="32"/>
    </location>
    <ligand>
        <name>[4Fe-4S] cluster</name>
        <dbReference type="ChEBI" id="CHEBI:49883"/>
        <note>ligand shared with heterodimeric partner</note>
    </ligand>
</feature>
<feature type="binding site" evidence="1">
    <location>
        <position position="57"/>
    </location>
    <ligand>
        <name>[4Fe-4S] cluster</name>
        <dbReference type="ChEBI" id="CHEBI:49883"/>
        <note>ligand shared with heterodimeric partner</note>
    </ligand>
</feature>
<feature type="binding site" evidence="1">
    <location>
        <position position="118"/>
    </location>
    <ligand>
        <name>[4Fe-4S] cluster</name>
        <dbReference type="ChEBI" id="CHEBI:49883"/>
        <note>ligand shared with heterodimeric partner</note>
    </ligand>
</feature>
<evidence type="ECO:0000255" key="1">
    <source>
        <dbReference type="HAMAP-Rule" id="MF_00352"/>
    </source>
</evidence>
<comment type="function">
    <text evidence="1">Component of the dark-operative protochlorophyllide reductase (DPOR) that uses Mg-ATP and reduced ferredoxin to reduce ring D of protochlorophyllide (Pchlide) to form chlorophyllide a (Chlide). This reaction is light-independent. The NB-protein (BchN-BchB) is the catalytic component of the complex.</text>
</comment>
<comment type="catalytic activity">
    <reaction evidence="1">
        <text>chlorophyllide a + oxidized 2[4Fe-4S]-[ferredoxin] + 2 ADP + 2 phosphate = protochlorophyllide a + reduced 2[4Fe-4S]-[ferredoxin] + 2 ATP + 2 H2O</text>
        <dbReference type="Rhea" id="RHEA:28202"/>
        <dbReference type="Rhea" id="RHEA-COMP:10002"/>
        <dbReference type="Rhea" id="RHEA-COMP:10004"/>
        <dbReference type="ChEBI" id="CHEBI:15377"/>
        <dbReference type="ChEBI" id="CHEBI:30616"/>
        <dbReference type="ChEBI" id="CHEBI:33722"/>
        <dbReference type="ChEBI" id="CHEBI:33723"/>
        <dbReference type="ChEBI" id="CHEBI:43474"/>
        <dbReference type="ChEBI" id="CHEBI:83348"/>
        <dbReference type="ChEBI" id="CHEBI:83350"/>
        <dbReference type="ChEBI" id="CHEBI:456216"/>
        <dbReference type="EC" id="1.3.7.7"/>
    </reaction>
</comment>
<comment type="cofactor">
    <cofactor evidence="1">
        <name>[4Fe-4S] cluster</name>
        <dbReference type="ChEBI" id="CHEBI:49883"/>
    </cofactor>
    <text evidence="1">Binds 1 [4Fe-4S] cluster per heterodimer. The cluster is bound at the heterodimer interface by residues from both subunits.</text>
</comment>
<comment type="pathway">
    <text evidence="1">Porphyrin-containing compound metabolism; bacteriochlorophyll biosynthesis (light-independent).</text>
</comment>
<comment type="subunit">
    <text evidence="1">Protochlorophyllide reductase is composed of three subunits; BchL, BchN and BchB. Forms a heterotetramer of two BchB and two BchN subunits.</text>
</comment>
<comment type="similarity">
    <text evidence="1">Belongs to the BchN/ChlN family.</text>
</comment>
<gene>
    <name evidence="1" type="primary">bchN</name>
    <name type="ordered locus">RGE_33460</name>
</gene>
<organism>
    <name type="scientific">Rubrivivax gelatinosus (strain NBRC 100245 / IL144)</name>
    <dbReference type="NCBI Taxonomy" id="983917"/>
    <lineage>
        <taxon>Bacteria</taxon>
        <taxon>Pseudomonadati</taxon>
        <taxon>Pseudomonadota</taxon>
        <taxon>Betaproteobacteria</taxon>
        <taxon>Burkholderiales</taxon>
        <taxon>Sphaerotilaceae</taxon>
        <taxon>Rubrivivax</taxon>
    </lineage>
</organism>
<accession>Q9JPA2</accession>
<accession>I0HUJ8</accession>
<name>BCHN_RUBGI</name>